<reference key="1">
    <citation type="journal article" date="2004" name="Nature">
        <title>Genome evolution in yeasts.</title>
        <authorList>
            <person name="Dujon B."/>
            <person name="Sherman D."/>
            <person name="Fischer G."/>
            <person name="Durrens P."/>
            <person name="Casaregola S."/>
            <person name="Lafontaine I."/>
            <person name="de Montigny J."/>
            <person name="Marck C."/>
            <person name="Neuveglise C."/>
            <person name="Talla E."/>
            <person name="Goffard N."/>
            <person name="Frangeul L."/>
            <person name="Aigle M."/>
            <person name="Anthouard V."/>
            <person name="Babour A."/>
            <person name="Barbe V."/>
            <person name="Barnay S."/>
            <person name="Blanchin S."/>
            <person name="Beckerich J.-M."/>
            <person name="Beyne E."/>
            <person name="Bleykasten C."/>
            <person name="Boisrame A."/>
            <person name="Boyer J."/>
            <person name="Cattolico L."/>
            <person name="Confanioleri F."/>
            <person name="de Daruvar A."/>
            <person name="Despons L."/>
            <person name="Fabre E."/>
            <person name="Fairhead C."/>
            <person name="Ferry-Dumazet H."/>
            <person name="Groppi A."/>
            <person name="Hantraye F."/>
            <person name="Hennequin C."/>
            <person name="Jauniaux N."/>
            <person name="Joyet P."/>
            <person name="Kachouri R."/>
            <person name="Kerrest A."/>
            <person name="Koszul R."/>
            <person name="Lemaire M."/>
            <person name="Lesur I."/>
            <person name="Ma L."/>
            <person name="Muller H."/>
            <person name="Nicaud J.-M."/>
            <person name="Nikolski M."/>
            <person name="Oztas S."/>
            <person name="Ozier-Kalogeropoulos O."/>
            <person name="Pellenz S."/>
            <person name="Potier S."/>
            <person name="Richard G.-F."/>
            <person name="Straub M.-L."/>
            <person name="Suleau A."/>
            <person name="Swennen D."/>
            <person name="Tekaia F."/>
            <person name="Wesolowski-Louvel M."/>
            <person name="Westhof E."/>
            <person name="Wirth B."/>
            <person name="Zeniou-Meyer M."/>
            <person name="Zivanovic Y."/>
            <person name="Bolotin-Fukuhara M."/>
            <person name="Thierry A."/>
            <person name="Bouchier C."/>
            <person name="Caudron B."/>
            <person name="Scarpelli C."/>
            <person name="Gaillardin C."/>
            <person name="Weissenbach J."/>
            <person name="Wincker P."/>
            <person name="Souciet J.-L."/>
        </authorList>
    </citation>
    <scope>NUCLEOTIDE SEQUENCE [LARGE SCALE GENOMIC DNA]</scope>
    <source>
        <strain>ATCC 8585 / CBS 2359 / DSM 70799 / NBRC 1267 / NRRL Y-1140 / WM37</strain>
    </source>
</reference>
<proteinExistence type="inferred from homology"/>
<comment type="function">
    <text evidence="1">Required for pre-18S rRNA processing. May bind microtubules (By similarity).</text>
</comment>
<comment type="subcellular location">
    <subcellularLocation>
        <location evidence="1">Nucleus</location>
        <location evidence="1">Nucleolus</location>
    </subcellularLocation>
</comment>
<comment type="similarity">
    <text evidence="5">Belongs to the NOP5/NOP56 family.</text>
</comment>
<protein>
    <recommendedName>
        <fullName>Nucleolar protein 58</fullName>
    </recommendedName>
</protein>
<name>NOP58_KLULA</name>
<keyword id="KW-0175">Coiled coil</keyword>
<keyword id="KW-0539">Nucleus</keyword>
<keyword id="KW-1185">Reference proteome</keyword>
<keyword id="KW-0687">Ribonucleoprotein</keyword>
<keyword id="KW-0690">Ribosome biogenesis</keyword>
<keyword id="KW-0698">rRNA processing</keyword>
<gene>
    <name type="primary">NOP58</name>
    <name type="ordered locus">KLLA0F08613g</name>
</gene>
<sequence length="511" mass="56679">MAYVLTETSAGYALLKASDKKIYKSSSLIQDLNSSDKVLNQFKIAAFSKFSSAANALEEANSVIDGKVSSQLEKLLEECKTDKKATLVVSETKLANAINKLGLNFNVVSDAVTLDIYRAVKEYLPELLPGLNDQDLSKMSLGLAHSIGRHKLKFSADKVDVMIIQAIALLDDLDKELNTYAMRCKEWYGWHFPELAKIVTDSVAYARIILTMGIRVNAAETDMSEILPEEIEERVKTAAEVSMGTEITPVDLINIKCLAEQIVEFAAYREQLSNYLSSRMKAIAPNLTQLVGELVGARLIAHSGSLISLAKSPASTIQILGAEKALFRALKTKHDTPKYGLLYHASLVGQASGKNKGKIARVLAAKAAVSLRYDALAEDRDDSGDIGLESRAKVESRLSQLEGRDLRTTPKVVREHKKTEITEARAYNADADTVSSAAAPADSDDESEDEEETKEEKKSKKDKKDKKRKRDDDEESKESKKSKKEKKDKKEKKEKKEKKEKKDKKSKKEKK</sequence>
<evidence type="ECO:0000250" key="1"/>
<evidence type="ECO:0000255" key="2"/>
<evidence type="ECO:0000255" key="3">
    <source>
        <dbReference type="PROSITE-ProRule" id="PRU00690"/>
    </source>
</evidence>
<evidence type="ECO:0000256" key="4">
    <source>
        <dbReference type="SAM" id="MobiDB-lite"/>
    </source>
</evidence>
<evidence type="ECO:0000305" key="5"/>
<dbReference type="EMBL" id="CR382126">
    <property type="protein sequence ID" value="CAG98179.1"/>
    <property type="molecule type" value="Genomic_DNA"/>
</dbReference>
<dbReference type="RefSeq" id="XP_455471.1">
    <property type="nucleotide sequence ID" value="XM_455471.1"/>
</dbReference>
<dbReference type="SMR" id="Q6CKR8"/>
<dbReference type="FunCoup" id="Q6CKR8">
    <property type="interactions" value="1765"/>
</dbReference>
<dbReference type="STRING" id="284590.Q6CKR8"/>
<dbReference type="PaxDb" id="284590-Q6CKR8"/>
<dbReference type="KEGG" id="kla:KLLA0_F08613g"/>
<dbReference type="eggNOG" id="KOG2572">
    <property type="taxonomic scope" value="Eukaryota"/>
</dbReference>
<dbReference type="HOGENOM" id="CLU_015495_5_2_1"/>
<dbReference type="InParanoid" id="Q6CKR8"/>
<dbReference type="OMA" id="MGMRSNW"/>
<dbReference type="Proteomes" id="UP000000598">
    <property type="component" value="Chromosome F"/>
</dbReference>
<dbReference type="GO" id="GO:0031428">
    <property type="term" value="C:box C/D methylation guide snoRNP complex"/>
    <property type="evidence" value="ECO:0007669"/>
    <property type="project" value="InterPro"/>
</dbReference>
<dbReference type="GO" id="GO:0005730">
    <property type="term" value="C:nucleolus"/>
    <property type="evidence" value="ECO:0007669"/>
    <property type="project" value="UniProtKB-SubCell"/>
</dbReference>
<dbReference type="GO" id="GO:0032040">
    <property type="term" value="C:small-subunit processome"/>
    <property type="evidence" value="ECO:0007669"/>
    <property type="project" value="InterPro"/>
</dbReference>
<dbReference type="GO" id="GO:0030515">
    <property type="term" value="F:snoRNA binding"/>
    <property type="evidence" value="ECO:0007669"/>
    <property type="project" value="InterPro"/>
</dbReference>
<dbReference type="GO" id="GO:0006364">
    <property type="term" value="P:rRNA processing"/>
    <property type="evidence" value="ECO:0007669"/>
    <property type="project" value="UniProtKB-KW"/>
</dbReference>
<dbReference type="FunFam" id="1.10.246.90:FF:000003">
    <property type="entry name" value="Nucleolar protein 58"/>
    <property type="match status" value="1"/>
</dbReference>
<dbReference type="FunFam" id="1.10.287.4070:FF:000001">
    <property type="entry name" value="Probable Nucleolar protein 58"/>
    <property type="match status" value="1"/>
</dbReference>
<dbReference type="Gene3D" id="1.10.287.4070">
    <property type="match status" value="1"/>
</dbReference>
<dbReference type="Gene3D" id="1.10.246.90">
    <property type="entry name" value="Nop domain"/>
    <property type="match status" value="1"/>
</dbReference>
<dbReference type="InterPro" id="IPR045056">
    <property type="entry name" value="Nop56/Nop58"/>
</dbReference>
<dbReference type="InterPro" id="IPR012974">
    <property type="entry name" value="NOP58/56_N"/>
</dbReference>
<dbReference type="InterPro" id="IPR042239">
    <property type="entry name" value="Nop_C"/>
</dbReference>
<dbReference type="InterPro" id="IPR002687">
    <property type="entry name" value="Nop_dom"/>
</dbReference>
<dbReference type="InterPro" id="IPR036070">
    <property type="entry name" value="Nop_dom_sf"/>
</dbReference>
<dbReference type="InterPro" id="IPR012976">
    <property type="entry name" value="NOSIC"/>
</dbReference>
<dbReference type="PANTHER" id="PTHR10894">
    <property type="entry name" value="NUCLEOLAR PROTEIN 5 NUCLEOLAR PROTEIN NOP5 NOP58"/>
    <property type="match status" value="1"/>
</dbReference>
<dbReference type="PANTHER" id="PTHR10894:SF1">
    <property type="entry name" value="NUCLEOLAR PROTEIN 58"/>
    <property type="match status" value="1"/>
</dbReference>
<dbReference type="Pfam" id="PF01798">
    <property type="entry name" value="Nop"/>
    <property type="match status" value="1"/>
</dbReference>
<dbReference type="Pfam" id="PF08156">
    <property type="entry name" value="NOP5NT"/>
    <property type="match status" value="1"/>
</dbReference>
<dbReference type="SMART" id="SM00931">
    <property type="entry name" value="NOSIC"/>
    <property type="match status" value="1"/>
</dbReference>
<dbReference type="SUPFAM" id="SSF89124">
    <property type="entry name" value="Nop domain"/>
    <property type="match status" value="1"/>
</dbReference>
<dbReference type="PROSITE" id="PS51358">
    <property type="entry name" value="NOP"/>
    <property type="match status" value="1"/>
</dbReference>
<feature type="chain" id="PRO_0000350985" description="Nucleolar protein 58">
    <location>
        <begin position="1"/>
        <end position="511"/>
    </location>
</feature>
<feature type="domain" description="Nop" evidence="3">
    <location>
        <begin position="283"/>
        <end position="403"/>
    </location>
</feature>
<feature type="region of interest" description="Disordered" evidence="4">
    <location>
        <begin position="398"/>
        <end position="511"/>
    </location>
</feature>
<feature type="coiled-coil region" evidence="2">
    <location>
        <begin position="442"/>
        <end position="511"/>
    </location>
</feature>
<feature type="compositionally biased region" description="Basic and acidic residues" evidence="4">
    <location>
        <begin position="398"/>
        <end position="408"/>
    </location>
</feature>
<feature type="compositionally biased region" description="Acidic residues" evidence="4">
    <location>
        <begin position="442"/>
        <end position="453"/>
    </location>
</feature>
<feature type="compositionally biased region" description="Basic residues" evidence="4">
    <location>
        <begin position="460"/>
        <end position="469"/>
    </location>
</feature>
<feature type="compositionally biased region" description="Basic residues" evidence="4">
    <location>
        <begin position="480"/>
        <end position="511"/>
    </location>
</feature>
<organism>
    <name type="scientific">Kluyveromyces lactis (strain ATCC 8585 / CBS 2359 / DSM 70799 / NBRC 1267 / NRRL Y-1140 / WM37)</name>
    <name type="common">Yeast</name>
    <name type="synonym">Candida sphaerica</name>
    <dbReference type="NCBI Taxonomy" id="284590"/>
    <lineage>
        <taxon>Eukaryota</taxon>
        <taxon>Fungi</taxon>
        <taxon>Dikarya</taxon>
        <taxon>Ascomycota</taxon>
        <taxon>Saccharomycotina</taxon>
        <taxon>Saccharomycetes</taxon>
        <taxon>Saccharomycetales</taxon>
        <taxon>Saccharomycetaceae</taxon>
        <taxon>Kluyveromyces</taxon>
    </lineage>
</organism>
<accession>Q6CKR8</accession>